<keyword id="KW-0007">Acetylation</keyword>
<keyword id="KW-0963">Cytoplasm</keyword>
<keyword id="KW-0378">Hydrolase</keyword>
<keyword id="KW-0479">Metal-binding</keyword>
<keyword id="KW-0539">Nucleus</keyword>
<keyword id="KW-1185">Reference proteome</keyword>
<keyword id="KW-0677">Repeat</keyword>
<keyword id="KW-0862">Zinc</keyword>
<keyword id="KW-0863">Zinc-finger</keyword>
<sequence length="577" mass="65722">MLSCDICGETVTSEPDRKAHLIVHMENEIICPFCKLSGINYNEMCFHIETAHFEQTTPEKSFETLAAVQYENSDLGNTKLHSTVEVTSGIHSACASNFPKESSESLSKDRTLKQEAFYTESVAESRKYQKSREKQSGLSEAQGSIYETTYSPPECPFCGRIERYSQDMEIHVKTKHASLLESPLEDCHQPLYDCPMCGLVCTNYHILQEHVDLHLEESSFQQGMDRVQCSSDRELAHQLQQEEERKRKSEESRQEREEFQKLQRQYGLDNSGGYKQQQLRHMELEVTRGRMHPSEFHSRKADMLESIAVGIDDGKTKTSGIIEALHRYYQNIATDVRCVWLSTVVDHFHSSFGDKGWGCGYRNFQMLLSSLLQNEVYSDCLKGMSVPCIPKIQSMIEDAWNEGFDPQGASQLNNKLQGTKAWIGACEIYTLLTSLKVKCRIIDFHKSTGPSGTHPRLFEWILNYYSSETEGAPKVVCTSKPPVYLQHQGHSRTVVGIEERKNRTLCLLIFDPGCPSREMQKLLKQDMEAGSLRQLRKCVGNLKHKQYQIVAVEGILSPEERAARKQASQVFTAEKIP</sequence>
<dbReference type="EC" id="3.4.19.12" evidence="1"/>
<dbReference type="EMBL" id="BC085885">
    <property type="protein sequence ID" value="AAH85885.1"/>
    <property type="molecule type" value="mRNA"/>
</dbReference>
<dbReference type="RefSeq" id="NP_001008309.1">
    <property type="nucleotide sequence ID" value="NM_001008308.1"/>
</dbReference>
<dbReference type="RefSeq" id="XP_017457109.1">
    <property type="nucleotide sequence ID" value="XM_017601620.1"/>
</dbReference>
<dbReference type="SMR" id="Q5U2S3"/>
<dbReference type="FunCoup" id="Q5U2S3">
    <property type="interactions" value="952"/>
</dbReference>
<dbReference type="STRING" id="10116.ENSRNOP00000000448"/>
<dbReference type="PhosphoSitePlus" id="Q5U2S3"/>
<dbReference type="PaxDb" id="10116-ENSRNOP00000000448"/>
<dbReference type="Ensembl" id="ENSRNOT00000000448.6">
    <property type="protein sequence ID" value="ENSRNOP00000000448.3"/>
    <property type="gene ID" value="ENSRNOG00000000398.7"/>
</dbReference>
<dbReference type="GeneID" id="294390"/>
<dbReference type="KEGG" id="rno:294390"/>
<dbReference type="UCSC" id="RGD:1307672">
    <property type="organism name" value="rat"/>
</dbReference>
<dbReference type="AGR" id="RGD:1307672"/>
<dbReference type="CTD" id="221302"/>
<dbReference type="RGD" id="1307672">
    <property type="gene designation" value="Zup1"/>
</dbReference>
<dbReference type="eggNOG" id="KOG4696">
    <property type="taxonomic scope" value="Eukaryota"/>
</dbReference>
<dbReference type="GeneTree" id="ENSGT00390000008232"/>
<dbReference type="HOGENOM" id="CLU_017060_1_1_1"/>
<dbReference type="InParanoid" id="Q5U2S3"/>
<dbReference type="OMA" id="CGSKAWI"/>
<dbReference type="OrthoDB" id="288987at2759"/>
<dbReference type="PhylomeDB" id="Q5U2S3"/>
<dbReference type="TreeFam" id="TF323699"/>
<dbReference type="PRO" id="PR:Q5U2S3"/>
<dbReference type="Proteomes" id="UP000002494">
    <property type="component" value="Chromosome 20"/>
</dbReference>
<dbReference type="Bgee" id="ENSRNOG00000000398">
    <property type="expression patterns" value="Expressed in cerebellum and 20 other cell types or tissues"/>
</dbReference>
<dbReference type="GO" id="GO:0005737">
    <property type="term" value="C:cytoplasm"/>
    <property type="evidence" value="ECO:0007669"/>
    <property type="project" value="UniProtKB-SubCell"/>
</dbReference>
<dbReference type="GO" id="GO:0005634">
    <property type="term" value="C:nucleus"/>
    <property type="evidence" value="ECO:0007669"/>
    <property type="project" value="UniProtKB-SubCell"/>
</dbReference>
<dbReference type="GO" id="GO:0004843">
    <property type="term" value="F:cysteine-type deubiquitinase activity"/>
    <property type="evidence" value="ECO:0007669"/>
    <property type="project" value="UniProtKB-EC"/>
</dbReference>
<dbReference type="GO" id="GO:0008270">
    <property type="term" value="F:zinc ion binding"/>
    <property type="evidence" value="ECO:0007669"/>
    <property type="project" value="UniProtKB-KW"/>
</dbReference>
<dbReference type="FunFam" id="3.90.70.130:FF:000002">
    <property type="entry name" value="Zinc finger containing ubiquitin peptidase 1"/>
    <property type="match status" value="1"/>
</dbReference>
<dbReference type="Gene3D" id="3.90.70.130">
    <property type="match status" value="1"/>
</dbReference>
<dbReference type="Gene3D" id="3.30.160.60">
    <property type="entry name" value="Classic Zinc Finger"/>
    <property type="match status" value="1"/>
</dbReference>
<dbReference type="InterPro" id="IPR038765">
    <property type="entry name" value="Papain-like_cys_pep_sf"/>
</dbReference>
<dbReference type="InterPro" id="IPR012462">
    <property type="entry name" value="UfSP1/2_DUB_cat"/>
</dbReference>
<dbReference type="InterPro" id="IPR050688">
    <property type="entry name" value="Zinc_finger/UBP_domain"/>
</dbReference>
<dbReference type="InterPro" id="IPR013087">
    <property type="entry name" value="Znf_C2H2_type"/>
</dbReference>
<dbReference type="PANTHER" id="PTHR24403">
    <property type="entry name" value="ZINC FINGER PROTEIN"/>
    <property type="match status" value="1"/>
</dbReference>
<dbReference type="PANTHER" id="PTHR24403:SF82">
    <property type="entry name" value="ZINC FINGER-CONTAINING UBIQUITIN PEPTIDASE 1"/>
    <property type="match status" value="1"/>
</dbReference>
<dbReference type="Pfam" id="PF07910">
    <property type="entry name" value="Peptidase_C78"/>
    <property type="match status" value="1"/>
</dbReference>
<dbReference type="SMART" id="SM00355">
    <property type="entry name" value="ZnF_C2H2"/>
    <property type="match status" value="4"/>
</dbReference>
<dbReference type="SUPFAM" id="SSF54001">
    <property type="entry name" value="Cysteine proteinases"/>
    <property type="match status" value="1"/>
</dbReference>
<dbReference type="PROSITE" id="PS00028">
    <property type="entry name" value="ZINC_FINGER_C2H2_1"/>
    <property type="match status" value="2"/>
</dbReference>
<dbReference type="PROSITE" id="PS50157">
    <property type="entry name" value="ZINC_FINGER_C2H2_2"/>
    <property type="match status" value="1"/>
</dbReference>
<proteinExistence type="evidence at transcript level"/>
<organism>
    <name type="scientific">Rattus norvegicus</name>
    <name type="common">Rat</name>
    <dbReference type="NCBI Taxonomy" id="10116"/>
    <lineage>
        <taxon>Eukaryota</taxon>
        <taxon>Metazoa</taxon>
        <taxon>Chordata</taxon>
        <taxon>Craniata</taxon>
        <taxon>Vertebrata</taxon>
        <taxon>Euteleostomi</taxon>
        <taxon>Mammalia</taxon>
        <taxon>Eutheria</taxon>
        <taxon>Euarchontoglires</taxon>
        <taxon>Glires</taxon>
        <taxon>Rodentia</taxon>
        <taxon>Myomorpha</taxon>
        <taxon>Muroidea</taxon>
        <taxon>Muridae</taxon>
        <taxon>Murinae</taxon>
        <taxon>Rattus</taxon>
    </lineage>
</organism>
<gene>
    <name evidence="6" type="primary">Zup1</name>
    <name type="synonym">Zufsp</name>
</gene>
<comment type="function">
    <text evidence="1">Deubiquitinase with endodeubiquitinase activity that specifically interacts with and cleaves 'Lys-63'-linked long polyubiquitin chains. Shows only weak activity against 'Lys-11' and 'Lys-48'-linked chains. Plays an important role in genome stability pathways, functioning to prevent spontaneous DNA damage and also promote cellular survival in response to exogenous DNA damage. Modulates the ubiquitination status of replication protein A (RPA) complex proteins in response to replication stress.</text>
</comment>
<comment type="catalytic activity">
    <reaction evidence="1">
        <text>Thiol-dependent hydrolysis of ester, thioester, amide, peptide and isopeptide bonds formed by the C-terminal Gly of ubiquitin (a 76-residue protein attached to proteins as an intracellular targeting signal).</text>
        <dbReference type="EC" id="3.4.19.12"/>
    </reaction>
</comment>
<comment type="subunit">
    <text evidence="1">Interacts with RPA1 and RPA2.</text>
</comment>
<comment type="subcellular location">
    <subcellularLocation>
        <location evidence="1">Cytoplasm</location>
    </subcellularLocation>
    <subcellularLocation>
        <location evidence="1">Nucleus</location>
    </subcellularLocation>
    <text evidence="1">Mostly present in the nuclear fraction. Localizes to DNA lesions.</text>
</comment>
<comment type="domain">
    <text evidence="1">The motif interacting with ubiquitin (MIU) and ZUFSP ubiquitin-binding domain (zUBD, also called ZUFSP helical arm ZHA) are responsible for binding the distal (outgoing) ubiquitin units S1 and S2 respectively.</text>
</comment>
<comment type="domain">
    <text evidence="1">C2H2-type zinc finger 4 is a ubiquitin-binding zinc finger (UBZ) and required for polyubiquitin binding, possibly binding the proximal ubiqutin, and for catalytic activity. C2H2-type zinc fingers 1-3 are required for localization to sites of DNA damage.</text>
</comment>
<comment type="similarity">
    <text evidence="5">Belongs to the peptidase C78 family. ZUFSP subfamily.</text>
</comment>
<accession>Q5U2S3</accession>
<name>ZUP1_RAT</name>
<feature type="chain" id="PRO_0000244339" description="Zinc finger-containing ubiquitin peptidase 1">
    <location>
        <begin position="1"/>
        <end position="577"/>
    </location>
</feature>
<feature type="zinc finger region" description="C2H2-type 1" evidence="3">
    <location>
        <begin position="2"/>
        <end position="24"/>
    </location>
</feature>
<feature type="zinc finger region" description="C2H2-type 2; atypical" evidence="1">
    <location>
        <begin position="29"/>
        <end position="52"/>
    </location>
</feature>
<feature type="zinc finger region" description="C2H2-type 3" evidence="3">
    <location>
        <begin position="153"/>
        <end position="176"/>
    </location>
</feature>
<feature type="zinc finger region" description="C2H2-type 4" evidence="3">
    <location>
        <begin position="192"/>
        <end position="214"/>
    </location>
</feature>
<feature type="region of interest" description="MIU" evidence="1">
    <location>
        <begin position="225"/>
        <end position="247"/>
    </location>
</feature>
<feature type="region of interest" description="Disordered" evidence="4">
    <location>
        <begin position="231"/>
        <end position="262"/>
    </location>
</feature>
<feature type="region of interest" description="zUBD/ZHA" evidence="1">
    <location>
        <begin position="248"/>
        <end position="273"/>
    </location>
</feature>
<feature type="compositionally biased region" description="Basic and acidic residues" evidence="4">
    <location>
        <begin position="231"/>
        <end position="261"/>
    </location>
</feature>
<feature type="active site" description="Nucleophile" evidence="1">
    <location>
        <position position="359"/>
    </location>
</feature>
<feature type="active site" description="Proton acceptor" evidence="1">
    <location>
        <position position="490"/>
    </location>
</feature>
<feature type="active site" evidence="2">
    <location>
        <position position="511"/>
    </location>
</feature>
<feature type="site" description="Involved in the stabilization of negative charge on the oxyanion by the formation of the oxyanion hole" evidence="1">
    <location>
        <position position="486"/>
    </location>
</feature>
<feature type="modified residue" description="N6-acetyllysine" evidence="1">
    <location>
        <position position="261"/>
    </location>
</feature>
<evidence type="ECO:0000250" key="1">
    <source>
        <dbReference type="UniProtKB" id="Q96AP4"/>
    </source>
</evidence>
<evidence type="ECO:0000250" key="2">
    <source>
        <dbReference type="UniProtKB" id="Q99K23"/>
    </source>
</evidence>
<evidence type="ECO:0000255" key="3">
    <source>
        <dbReference type="PROSITE-ProRule" id="PRU00042"/>
    </source>
</evidence>
<evidence type="ECO:0000256" key="4">
    <source>
        <dbReference type="SAM" id="MobiDB-lite"/>
    </source>
</evidence>
<evidence type="ECO:0000305" key="5"/>
<evidence type="ECO:0000312" key="6">
    <source>
        <dbReference type="RGD" id="1307672"/>
    </source>
</evidence>
<protein>
    <recommendedName>
        <fullName evidence="5">Zinc finger-containing ubiquitin peptidase 1</fullName>
        <ecNumber evidence="1">3.4.19.12</ecNumber>
    </recommendedName>
    <alternativeName>
        <fullName>Lys-63-specific deubiquitinase ZUFSP</fullName>
        <shortName>DUB</shortName>
    </alternativeName>
    <alternativeName>
        <fullName>Zinc finger with UFM1-specific peptidase domain protein</fullName>
    </alternativeName>
</protein>
<reference key="1">
    <citation type="journal article" date="2004" name="Genome Res.">
        <title>The status, quality, and expansion of the NIH full-length cDNA project: the Mammalian Gene Collection (MGC).</title>
        <authorList>
            <consortium name="The MGC Project Team"/>
        </authorList>
    </citation>
    <scope>NUCLEOTIDE SEQUENCE [LARGE SCALE MRNA]</scope>
    <source>
        <tissue>Heart</tissue>
    </source>
</reference>